<accession>Q8NTB0</accession>
<proteinExistence type="inferred from homology"/>
<reference key="1">
    <citation type="journal article" date="2003" name="Appl. Microbiol. Biotechnol.">
        <title>The Corynebacterium glutamicum genome: features and impacts on biotechnological processes.</title>
        <authorList>
            <person name="Ikeda M."/>
            <person name="Nakagawa S."/>
        </authorList>
    </citation>
    <scope>NUCLEOTIDE SEQUENCE [LARGE SCALE GENOMIC DNA]</scope>
    <source>
        <strain>ATCC 13032 / DSM 20300 / JCM 1318 / BCRC 11384 / CCUG 27702 / LMG 3730 / NBRC 12168 / NCIMB 10025 / NRRL B-2784 / 534</strain>
    </source>
</reference>
<reference key="2">
    <citation type="journal article" date="2003" name="J. Biotechnol.">
        <title>The complete Corynebacterium glutamicum ATCC 13032 genome sequence and its impact on the production of L-aspartate-derived amino acids and vitamins.</title>
        <authorList>
            <person name="Kalinowski J."/>
            <person name="Bathe B."/>
            <person name="Bartels D."/>
            <person name="Bischoff N."/>
            <person name="Bott M."/>
            <person name="Burkovski A."/>
            <person name="Dusch N."/>
            <person name="Eggeling L."/>
            <person name="Eikmanns B.J."/>
            <person name="Gaigalat L."/>
            <person name="Goesmann A."/>
            <person name="Hartmann M."/>
            <person name="Huthmacher K."/>
            <person name="Kraemer R."/>
            <person name="Linke B."/>
            <person name="McHardy A.C."/>
            <person name="Meyer F."/>
            <person name="Moeckel B."/>
            <person name="Pfefferle W."/>
            <person name="Puehler A."/>
            <person name="Rey D.A."/>
            <person name="Rueckert C."/>
            <person name="Rupp O."/>
            <person name="Sahm H."/>
            <person name="Wendisch V.F."/>
            <person name="Wiegraebe I."/>
            <person name="Tauch A."/>
        </authorList>
    </citation>
    <scope>NUCLEOTIDE SEQUENCE [LARGE SCALE GENOMIC DNA]</scope>
    <source>
        <strain>ATCC 13032 / DSM 20300 / JCM 1318 / BCRC 11384 / CCUG 27702 / LMG 3730 / NBRC 12168 / NCIMB 10025 / NRRL B-2784 / 534</strain>
    </source>
</reference>
<dbReference type="EC" id="1.3.1.98"/>
<dbReference type="EMBL" id="BA000036">
    <property type="protein sequence ID" value="BAB97790.1"/>
    <property type="molecule type" value="Genomic_DNA"/>
</dbReference>
<dbReference type="EMBL" id="BX927149">
    <property type="protein sequence ID" value="CAF19112.1"/>
    <property type="status" value="ALT_INIT"/>
    <property type="molecule type" value="Genomic_DNA"/>
</dbReference>
<dbReference type="RefSeq" id="NP_599645.1">
    <property type="nucleotide sequence ID" value="NC_003450.3"/>
</dbReference>
<dbReference type="SMR" id="Q8NTB0"/>
<dbReference type="STRING" id="196627.cg0476"/>
<dbReference type="KEGG" id="cgb:cg0476"/>
<dbReference type="KEGG" id="cgl:Cgl0397"/>
<dbReference type="PATRIC" id="fig|196627.13.peg.398"/>
<dbReference type="eggNOG" id="COG0812">
    <property type="taxonomic scope" value="Bacteria"/>
</dbReference>
<dbReference type="HOGENOM" id="CLU_035304_0_1_11"/>
<dbReference type="OrthoDB" id="9804753at2"/>
<dbReference type="BioCyc" id="CORYNE:G18NG-9954-MONOMER"/>
<dbReference type="UniPathway" id="UPA00219"/>
<dbReference type="Proteomes" id="UP000000582">
    <property type="component" value="Chromosome"/>
</dbReference>
<dbReference type="Proteomes" id="UP000001009">
    <property type="component" value="Chromosome"/>
</dbReference>
<dbReference type="GO" id="GO:0005829">
    <property type="term" value="C:cytosol"/>
    <property type="evidence" value="ECO:0007669"/>
    <property type="project" value="TreeGrafter"/>
</dbReference>
<dbReference type="GO" id="GO:0071949">
    <property type="term" value="F:FAD binding"/>
    <property type="evidence" value="ECO:0007669"/>
    <property type="project" value="InterPro"/>
</dbReference>
<dbReference type="GO" id="GO:0008762">
    <property type="term" value="F:UDP-N-acetylmuramate dehydrogenase activity"/>
    <property type="evidence" value="ECO:0007669"/>
    <property type="project" value="UniProtKB-UniRule"/>
</dbReference>
<dbReference type="GO" id="GO:0051301">
    <property type="term" value="P:cell division"/>
    <property type="evidence" value="ECO:0007669"/>
    <property type="project" value="UniProtKB-KW"/>
</dbReference>
<dbReference type="GO" id="GO:0071555">
    <property type="term" value="P:cell wall organization"/>
    <property type="evidence" value="ECO:0007669"/>
    <property type="project" value="UniProtKB-KW"/>
</dbReference>
<dbReference type="GO" id="GO:0009252">
    <property type="term" value="P:peptidoglycan biosynthetic process"/>
    <property type="evidence" value="ECO:0007669"/>
    <property type="project" value="UniProtKB-UniRule"/>
</dbReference>
<dbReference type="GO" id="GO:0008360">
    <property type="term" value="P:regulation of cell shape"/>
    <property type="evidence" value="ECO:0007669"/>
    <property type="project" value="UniProtKB-KW"/>
</dbReference>
<dbReference type="Gene3D" id="3.30.465.10">
    <property type="match status" value="1"/>
</dbReference>
<dbReference type="Gene3D" id="3.90.78.10">
    <property type="entry name" value="UDP-N-acetylenolpyruvoylglucosamine reductase, C-terminal domain"/>
    <property type="match status" value="1"/>
</dbReference>
<dbReference type="Gene3D" id="3.30.43.10">
    <property type="entry name" value="Uridine Diphospho-n-acetylenolpyruvylglucosamine Reductase, domain 2"/>
    <property type="match status" value="1"/>
</dbReference>
<dbReference type="HAMAP" id="MF_00037">
    <property type="entry name" value="MurB"/>
    <property type="match status" value="1"/>
</dbReference>
<dbReference type="InterPro" id="IPR016166">
    <property type="entry name" value="FAD-bd_PCMH"/>
</dbReference>
<dbReference type="InterPro" id="IPR036318">
    <property type="entry name" value="FAD-bd_PCMH-like_sf"/>
</dbReference>
<dbReference type="InterPro" id="IPR016167">
    <property type="entry name" value="FAD-bd_PCMH_sub1"/>
</dbReference>
<dbReference type="InterPro" id="IPR016169">
    <property type="entry name" value="FAD-bd_PCMH_sub2"/>
</dbReference>
<dbReference type="InterPro" id="IPR003170">
    <property type="entry name" value="MurB"/>
</dbReference>
<dbReference type="InterPro" id="IPR011601">
    <property type="entry name" value="MurB_C"/>
</dbReference>
<dbReference type="InterPro" id="IPR036635">
    <property type="entry name" value="MurB_C_sf"/>
</dbReference>
<dbReference type="InterPro" id="IPR006094">
    <property type="entry name" value="Oxid_FAD_bind_N"/>
</dbReference>
<dbReference type="NCBIfam" id="NF010478">
    <property type="entry name" value="PRK13903.1"/>
    <property type="match status" value="1"/>
</dbReference>
<dbReference type="PANTHER" id="PTHR21071">
    <property type="entry name" value="UDP-N-ACETYLENOLPYRUVOYLGLUCOSAMINE REDUCTASE"/>
    <property type="match status" value="1"/>
</dbReference>
<dbReference type="PANTHER" id="PTHR21071:SF4">
    <property type="entry name" value="UDP-N-ACETYLENOLPYRUVOYLGLUCOSAMINE REDUCTASE"/>
    <property type="match status" value="1"/>
</dbReference>
<dbReference type="Pfam" id="PF01565">
    <property type="entry name" value="FAD_binding_4"/>
    <property type="match status" value="1"/>
</dbReference>
<dbReference type="Pfam" id="PF02873">
    <property type="entry name" value="MurB_C"/>
    <property type="match status" value="1"/>
</dbReference>
<dbReference type="SUPFAM" id="SSF56176">
    <property type="entry name" value="FAD-binding/transporter-associated domain-like"/>
    <property type="match status" value="1"/>
</dbReference>
<dbReference type="SUPFAM" id="SSF56194">
    <property type="entry name" value="Uridine diphospho-N-Acetylenolpyruvylglucosamine reductase, MurB, C-terminal domain"/>
    <property type="match status" value="1"/>
</dbReference>
<dbReference type="PROSITE" id="PS51387">
    <property type="entry name" value="FAD_PCMH"/>
    <property type="match status" value="1"/>
</dbReference>
<evidence type="ECO:0000250" key="1"/>
<evidence type="ECO:0000305" key="2"/>
<comment type="function">
    <text evidence="1">Cell wall formation.</text>
</comment>
<comment type="catalytic activity">
    <reaction>
        <text>UDP-N-acetyl-alpha-D-muramate + NADP(+) = UDP-N-acetyl-3-O-(1-carboxyvinyl)-alpha-D-glucosamine + NADPH + H(+)</text>
        <dbReference type="Rhea" id="RHEA:12248"/>
        <dbReference type="ChEBI" id="CHEBI:15378"/>
        <dbReference type="ChEBI" id="CHEBI:57783"/>
        <dbReference type="ChEBI" id="CHEBI:58349"/>
        <dbReference type="ChEBI" id="CHEBI:68483"/>
        <dbReference type="ChEBI" id="CHEBI:70757"/>
        <dbReference type="EC" id="1.3.1.98"/>
    </reaction>
</comment>
<comment type="cofactor">
    <cofactor evidence="1">
        <name>FAD</name>
        <dbReference type="ChEBI" id="CHEBI:57692"/>
    </cofactor>
</comment>
<comment type="pathway">
    <text>Cell wall biogenesis; peptidoglycan biosynthesis.</text>
</comment>
<comment type="subcellular location">
    <subcellularLocation>
        <location evidence="1">Cytoplasm</location>
    </subcellularLocation>
</comment>
<comment type="similarity">
    <text evidence="2">Belongs to the MurB family.</text>
</comment>
<comment type="sequence caution" evidence="2">
    <conflict type="erroneous initiation">
        <sequence resource="EMBL-CDS" id="CAF19112"/>
    </conflict>
</comment>
<organism>
    <name type="scientific">Corynebacterium glutamicum (strain ATCC 13032 / DSM 20300 / JCM 1318 / BCRC 11384 / CCUG 27702 / LMG 3730 / NBRC 12168 / NCIMB 10025 / NRRL B-2784 / 534)</name>
    <dbReference type="NCBI Taxonomy" id="196627"/>
    <lineage>
        <taxon>Bacteria</taxon>
        <taxon>Bacillati</taxon>
        <taxon>Actinomycetota</taxon>
        <taxon>Actinomycetes</taxon>
        <taxon>Mycobacteriales</taxon>
        <taxon>Corynebacteriaceae</taxon>
        <taxon>Corynebacterium</taxon>
    </lineage>
</organism>
<feature type="chain" id="PRO_0000179204" description="UDP-N-acetylenolpyruvoylglucosamine reductase 2">
    <location>
        <begin position="1"/>
        <end position="367"/>
    </location>
</feature>
<feature type="domain" description="FAD-binding PCMH-type">
    <location>
        <begin position="31"/>
        <end position="198"/>
    </location>
</feature>
<feature type="active site" evidence="1">
    <location>
        <position position="176"/>
    </location>
</feature>
<feature type="active site" description="Proton donor" evidence="1">
    <location>
        <position position="256"/>
    </location>
</feature>
<feature type="active site" evidence="1">
    <location>
        <position position="357"/>
    </location>
</feature>
<keyword id="KW-0131">Cell cycle</keyword>
<keyword id="KW-0132">Cell division</keyword>
<keyword id="KW-0133">Cell shape</keyword>
<keyword id="KW-0961">Cell wall biogenesis/degradation</keyword>
<keyword id="KW-0963">Cytoplasm</keyword>
<keyword id="KW-0274">FAD</keyword>
<keyword id="KW-0285">Flavoprotein</keyword>
<keyword id="KW-0521">NADP</keyword>
<keyword id="KW-0560">Oxidoreductase</keyword>
<keyword id="KW-0573">Peptidoglycan synthesis</keyword>
<keyword id="KW-1185">Reference proteome</keyword>
<gene>
    <name type="primary">murB2</name>
    <name type="ordered locus">Cgl0397</name>
    <name type="ordered locus">cg0476</name>
</gene>
<name>MURB2_CORGL</name>
<sequence>MDSSLAQEIAAIDGVELDSEVTFADLTTLRIGGKPRSAVRCQTTEALVSAIKLLDDASLPLLIVGGGSNLVVADGDLDVIAVIIETDDVSINLTDGLLTADAGAVWDDVVHLSVDAGLGGIECLSGIPGSAGATPVQNVGAYGTEVSDVLTRVQLLDRTTHQVSWVDASELDLSYRYSNLKFTNRAVVLAIELQLLTDGLSAPLRFGELGRRLAISEAEPHPRRPVRMVRDAVLELRRAKGMVVEHTDHDTWSAGSFFTNPIVDPALADAVFEKVGEPTMPRFPAGDGKEKLSAAWLIERAGFKKGHPGAGAKASLSTKHTLALTNRGDARASDLVALAKEIRDGVLETFGVTLVPEPVWIGISIDD</sequence>
<protein>
    <recommendedName>
        <fullName>UDP-N-acetylenolpyruvoylglucosamine reductase 2</fullName>
        <ecNumber>1.3.1.98</ecNumber>
    </recommendedName>
    <alternativeName>
        <fullName>UDP-N-acetylmuramate dehydrogenase 2</fullName>
    </alternativeName>
</protein>